<feature type="chain" id="PRO_0000013273" description="Replicative DNA helicase DnaB, 1st part" evidence="3">
    <location>
        <begin position="1" status="less than"/>
        <end position="15"/>
    </location>
</feature>
<feature type="chain" id="PRO_0000013274" description="Min DnaB intein" evidence="3">
    <location>
        <begin position="16"/>
        <end position="351"/>
    </location>
</feature>
<feature type="chain" id="PRO_0000013275" description="Replicative DNA helicase DnaB, 2nd part" evidence="3">
    <location>
        <begin position="352"/>
        <end position="576"/>
    </location>
</feature>
<feature type="domain" description="DOD-type homing endonuclease" evidence="4">
    <location>
        <begin position="154"/>
        <end position="260"/>
    </location>
</feature>
<feature type="domain" description="SF4 helicase" evidence="5">
    <location>
        <begin position="313"/>
        <end position="576"/>
    </location>
</feature>
<feature type="non-terminal residue">
    <location>
        <position position="1"/>
    </location>
</feature>
<gene>
    <name type="primary">dnaB</name>
</gene>
<name>DNAB_MYCIT</name>
<sequence>RWADIIVAARPGVGKALALDTPLPTPTGWTTTGDVAVGDELLGADGKPTRVVAATEVLLGRPCYEVEFSDGTVIVADAAHQWLTETRASRKSAQAAAAGYNRYKNQRTFAAVRTTAEIAGTLRCPTLDRRLNHSVVNARALDLPDREFLVPPYTLGAWLGDGTSAAAQITAADPEIIMRIEAEMSSTVGTLQARLRTIGVLGNKHIPTEYLRGSETQRRELLAGLLDTDGTVTAGGAVQFSVTNQRLACDVAELIVSLGYRCQTSTKRVRGRNESSSIAYTLTFSTEKKMFALERKAIHKERRAMAGTTRSGSRFIVDVRPVETVAVRCVEVDNGSHLYLASRAMVPTHNSTLGLDFLRSCSIKHRMASVIFSLEMSKSEIVMRLLSAEAKIKLADMRSGRMSDEDWTRLARRMSEISEAPLYIDDSPNLTMMEIRAKARRLRQKADLRLVVVDYLQLMSSGKKVESRQLEVSEFSRQLKLLAKELEVPVVAISQLNRGPEQRTDKKPMLSDLRESGSLEQDADMVILLNRPDAFERDDPRGGEADFILAKHRNGPTKTVTVAHQLHLSRFANMAR</sequence>
<protein>
    <recommendedName>
        <fullName>Replicative DNA helicase DnaB</fullName>
        <ecNumber evidence="1">5.6.2.3</ecNumber>
    </recommendedName>
    <alternativeName>
        <fullName evidence="6">DNA 5'-3' helicase DnaB</fullName>
    </alternativeName>
    <component>
        <recommendedName>
            <fullName>Min DnaB intein</fullName>
            <ecNumber evidence="2">3.1.-.-</ecNumber>
        </recommendedName>
    </component>
</protein>
<organism>
    <name type="scientific">Mycobacterium intracellulare</name>
    <dbReference type="NCBI Taxonomy" id="1767"/>
    <lineage>
        <taxon>Bacteria</taxon>
        <taxon>Bacillati</taxon>
        <taxon>Actinomycetota</taxon>
        <taxon>Actinomycetes</taxon>
        <taxon>Mycobacteriales</taxon>
        <taxon>Mycobacteriaceae</taxon>
        <taxon>Mycobacterium</taxon>
        <taxon>Mycobacterium avium complex (MAC)</taxon>
    </lineage>
</organism>
<reference key="1">
    <citation type="submission" date="2000-09" db="EMBL/GenBank/DDBJ databases">
        <authorList>
            <person name="Madiraju M.V.V.S."/>
            <person name="Yamamoto K."/>
            <person name="Rajagopalan M."/>
            <person name="Rutherford S.A."/>
        </authorList>
    </citation>
    <scope>NUCLEOTIDE SEQUENCE [GENOMIC DNA]</scope>
    <source>
        <strain>1442</strain>
    </source>
</reference>
<comment type="function">
    <text evidence="1">The main replicative DNA helicase, it participates in initiation and elongation during chromosome replication. Travels ahead of the DNA replisome, separating dsDNA into templates for DNA synthesis. A processive ATP-dependent 5'-3' DNA helicase it has DNA-dependent ATPase activity.</text>
</comment>
<comment type="function">
    <text evidence="2">The intein is an endonuclease.</text>
</comment>
<comment type="catalytic activity">
    <reaction evidence="1">
        <text>Couples ATP hydrolysis with the unwinding of duplex DNA at the replication fork by translocating in the 5'-3' direction. This creates two antiparallel DNA single strands (ssDNA). The leading ssDNA polymer is the template for DNA polymerase III holoenzyme which synthesizes a continuous strand.</text>
        <dbReference type="EC" id="5.6.2.3"/>
    </reaction>
</comment>
<comment type="catalytic activity">
    <reaction evidence="1">
        <text>ATP + H2O = ADP + phosphate + H(+)</text>
        <dbReference type="Rhea" id="RHEA:13065"/>
        <dbReference type="ChEBI" id="CHEBI:15377"/>
        <dbReference type="ChEBI" id="CHEBI:15378"/>
        <dbReference type="ChEBI" id="CHEBI:30616"/>
        <dbReference type="ChEBI" id="CHEBI:43474"/>
        <dbReference type="ChEBI" id="CHEBI:456216"/>
        <dbReference type="EC" id="5.6.2.3"/>
    </reaction>
</comment>
<comment type="subunit">
    <text evidence="1">Homohexamer.</text>
</comment>
<comment type="PTM">
    <text evidence="2">This protein undergoes a protein self splicing that involves a post-translational excision of the intervening region (intein) followed by peptide ligation.</text>
</comment>
<comment type="similarity">
    <text evidence="6">Belongs to the helicase family. DnaB subfamily.</text>
</comment>
<dbReference type="EC" id="5.6.2.3" evidence="1"/>
<dbReference type="EC" id="3.1.-.-" evidence="2"/>
<dbReference type="EMBL" id="AF307984">
    <property type="protein sequence ID" value="AAG31144.1"/>
    <property type="molecule type" value="Genomic_DNA"/>
</dbReference>
<dbReference type="SMR" id="Q9F5P4"/>
<dbReference type="GO" id="GO:0005829">
    <property type="term" value="C:cytosol"/>
    <property type="evidence" value="ECO:0007669"/>
    <property type="project" value="TreeGrafter"/>
</dbReference>
<dbReference type="GO" id="GO:1990077">
    <property type="term" value="C:primosome complex"/>
    <property type="evidence" value="ECO:0007669"/>
    <property type="project" value="UniProtKB-KW"/>
</dbReference>
<dbReference type="GO" id="GO:0005524">
    <property type="term" value="F:ATP binding"/>
    <property type="evidence" value="ECO:0007669"/>
    <property type="project" value="UniProtKB-KW"/>
</dbReference>
<dbReference type="GO" id="GO:0016887">
    <property type="term" value="F:ATP hydrolysis activity"/>
    <property type="evidence" value="ECO:0007669"/>
    <property type="project" value="RHEA"/>
</dbReference>
<dbReference type="GO" id="GO:0003677">
    <property type="term" value="F:DNA binding"/>
    <property type="evidence" value="ECO:0007669"/>
    <property type="project" value="UniProtKB-KW"/>
</dbReference>
<dbReference type="GO" id="GO:0003678">
    <property type="term" value="F:DNA helicase activity"/>
    <property type="evidence" value="ECO:0007669"/>
    <property type="project" value="InterPro"/>
</dbReference>
<dbReference type="GO" id="GO:0004519">
    <property type="term" value="F:endonuclease activity"/>
    <property type="evidence" value="ECO:0007669"/>
    <property type="project" value="InterPro"/>
</dbReference>
<dbReference type="GO" id="GO:0006269">
    <property type="term" value="P:DNA replication, synthesis of primer"/>
    <property type="evidence" value="ECO:0007669"/>
    <property type="project" value="UniProtKB-KW"/>
</dbReference>
<dbReference type="GO" id="GO:0016539">
    <property type="term" value="P:intein-mediated protein splicing"/>
    <property type="evidence" value="ECO:0007669"/>
    <property type="project" value="InterPro"/>
</dbReference>
<dbReference type="CDD" id="cd00984">
    <property type="entry name" value="DnaB_C"/>
    <property type="match status" value="1"/>
</dbReference>
<dbReference type="Gene3D" id="3.10.28.10">
    <property type="entry name" value="Homing endonucleases"/>
    <property type="match status" value="1"/>
</dbReference>
<dbReference type="Gene3D" id="3.40.50.300">
    <property type="entry name" value="P-loop containing nucleotide triphosphate hydrolases"/>
    <property type="match status" value="1"/>
</dbReference>
<dbReference type="InterPro" id="IPR007694">
    <property type="entry name" value="DNA_helicase_DnaB-like_C"/>
</dbReference>
<dbReference type="InterPro" id="IPR036844">
    <property type="entry name" value="Hint_dom_sf"/>
</dbReference>
<dbReference type="InterPro" id="IPR027434">
    <property type="entry name" value="Homing_endonucl"/>
</dbReference>
<dbReference type="InterPro" id="IPR006142">
    <property type="entry name" value="INTEIN"/>
</dbReference>
<dbReference type="InterPro" id="IPR004042">
    <property type="entry name" value="Intein_endonuc_central"/>
</dbReference>
<dbReference type="InterPro" id="IPR004860">
    <property type="entry name" value="LAGLIDADG_dom"/>
</dbReference>
<dbReference type="InterPro" id="IPR027417">
    <property type="entry name" value="P-loop_NTPase"/>
</dbReference>
<dbReference type="PANTHER" id="PTHR30153:SF2">
    <property type="entry name" value="REPLICATIVE DNA HELICASE"/>
    <property type="match status" value="1"/>
</dbReference>
<dbReference type="PANTHER" id="PTHR30153">
    <property type="entry name" value="REPLICATIVE DNA HELICASE DNAB"/>
    <property type="match status" value="1"/>
</dbReference>
<dbReference type="Pfam" id="PF03796">
    <property type="entry name" value="DnaB_C"/>
    <property type="match status" value="1"/>
</dbReference>
<dbReference type="Pfam" id="PF14528">
    <property type="entry name" value="LAGLIDADG_3"/>
    <property type="match status" value="1"/>
</dbReference>
<dbReference type="PRINTS" id="PR00379">
    <property type="entry name" value="INTEIN"/>
</dbReference>
<dbReference type="SUPFAM" id="SSF51294">
    <property type="entry name" value="Hedgehog/intein (Hint) domain"/>
    <property type="match status" value="1"/>
</dbReference>
<dbReference type="SUPFAM" id="SSF55608">
    <property type="entry name" value="Homing endonucleases"/>
    <property type="match status" value="1"/>
</dbReference>
<dbReference type="SUPFAM" id="SSF52540">
    <property type="entry name" value="P-loop containing nucleoside triphosphate hydrolases"/>
    <property type="match status" value="1"/>
</dbReference>
<dbReference type="PROSITE" id="PS50819">
    <property type="entry name" value="INTEIN_ENDONUCLEASE"/>
    <property type="match status" value="1"/>
</dbReference>
<dbReference type="PROSITE" id="PS51199">
    <property type="entry name" value="SF4_HELICASE"/>
    <property type="match status" value="1"/>
</dbReference>
<proteinExistence type="inferred from homology"/>
<keyword id="KW-0067">ATP-binding</keyword>
<keyword id="KW-0068">Autocatalytic cleavage</keyword>
<keyword id="KW-0235">DNA replication</keyword>
<keyword id="KW-0238">DNA-binding</keyword>
<keyword id="KW-0347">Helicase</keyword>
<keyword id="KW-0378">Hydrolase</keyword>
<keyword id="KW-0413">Isomerase</keyword>
<keyword id="KW-0547">Nucleotide-binding</keyword>
<keyword id="KW-0639">Primosome</keyword>
<keyword id="KW-0651">Protein splicing</keyword>
<accession>Q9F5P4</accession>
<evidence type="ECO:0000250" key="1">
    <source>
        <dbReference type="UniProtKB" id="P9WMR3"/>
    </source>
</evidence>
<evidence type="ECO:0000250" key="2">
    <source>
        <dbReference type="UniProtKB" id="Q55418"/>
    </source>
</evidence>
<evidence type="ECO:0000255" key="3"/>
<evidence type="ECO:0000255" key="4">
    <source>
        <dbReference type="PROSITE-ProRule" id="PRU00273"/>
    </source>
</evidence>
<evidence type="ECO:0000255" key="5">
    <source>
        <dbReference type="PROSITE-ProRule" id="PRU00596"/>
    </source>
</evidence>
<evidence type="ECO:0000305" key="6"/>